<comment type="similarity">
    <text evidence="1">Belongs to the GerPA/GerPF family.</text>
</comment>
<protein>
    <recommendedName>
        <fullName>Spore germination protein-like protein YpzD</fullName>
    </recommendedName>
</protein>
<keyword id="KW-1185">Reference proteome</keyword>
<feature type="chain" id="PRO_0000049735" description="Spore germination protein-like protein YpzD">
    <location>
        <begin position="1"/>
        <end position="70"/>
    </location>
</feature>
<sequence>MIDYPININNVSGNSVINVGGAFMIRPLTLSKSVFGSGGLNTGIVFENNFVSKAKMINHQFTDQNVTKTF</sequence>
<organism>
    <name type="scientific">Bacillus subtilis (strain 168)</name>
    <dbReference type="NCBI Taxonomy" id="224308"/>
    <lineage>
        <taxon>Bacteria</taxon>
        <taxon>Bacillati</taxon>
        <taxon>Bacillota</taxon>
        <taxon>Bacilli</taxon>
        <taxon>Bacillales</taxon>
        <taxon>Bacillaceae</taxon>
        <taxon>Bacillus</taxon>
    </lineage>
</organism>
<dbReference type="EMBL" id="AL009126">
    <property type="protein sequence ID" value="CAB14267.1"/>
    <property type="molecule type" value="Genomic_DNA"/>
</dbReference>
<dbReference type="PIR" id="G69943">
    <property type="entry name" value="G69943"/>
</dbReference>
<dbReference type="RefSeq" id="NP_390216.1">
    <property type="nucleotide sequence ID" value="NC_000964.3"/>
</dbReference>
<dbReference type="RefSeq" id="WP_003230479.1">
    <property type="nucleotide sequence ID" value="NZ_OZ025638.1"/>
</dbReference>
<dbReference type="FunCoup" id="O32013">
    <property type="interactions" value="163"/>
</dbReference>
<dbReference type="STRING" id="224308.BSU23350"/>
<dbReference type="PaxDb" id="224308-BSU23350"/>
<dbReference type="EnsemblBacteria" id="CAB14267">
    <property type="protein sequence ID" value="CAB14267"/>
    <property type="gene ID" value="BSU_23350"/>
</dbReference>
<dbReference type="GeneID" id="938937"/>
<dbReference type="KEGG" id="bsu:BSU23350"/>
<dbReference type="PATRIC" id="fig|224308.179.peg.2543"/>
<dbReference type="InParanoid" id="O32013"/>
<dbReference type="OrthoDB" id="2935994at2"/>
<dbReference type="BioCyc" id="BSUB:BSU23350-MONOMER"/>
<dbReference type="Proteomes" id="UP000001570">
    <property type="component" value="Chromosome"/>
</dbReference>
<dbReference type="InterPro" id="IPR019618">
    <property type="entry name" value="Spore_germination_GerPA"/>
</dbReference>
<dbReference type="PANTHER" id="PTHR37808:SF1">
    <property type="entry name" value="SPORE GERMINATION PROTEIN-LIKE PROTEIN YDZR"/>
    <property type="match status" value="1"/>
</dbReference>
<dbReference type="PANTHER" id="PTHR37808">
    <property type="entry name" value="SPORE GERMINATION PROTEIN-LIKE PROTEIN YDZR-RELATED"/>
    <property type="match status" value="1"/>
</dbReference>
<dbReference type="Pfam" id="PF10676">
    <property type="entry name" value="gerPA"/>
    <property type="match status" value="1"/>
</dbReference>
<proteinExistence type="inferred from homology"/>
<reference key="1">
    <citation type="journal article" date="1997" name="Nature">
        <title>The complete genome sequence of the Gram-positive bacterium Bacillus subtilis.</title>
        <authorList>
            <person name="Kunst F."/>
            <person name="Ogasawara N."/>
            <person name="Moszer I."/>
            <person name="Albertini A.M."/>
            <person name="Alloni G."/>
            <person name="Azevedo V."/>
            <person name="Bertero M.G."/>
            <person name="Bessieres P."/>
            <person name="Bolotin A."/>
            <person name="Borchert S."/>
            <person name="Borriss R."/>
            <person name="Boursier L."/>
            <person name="Brans A."/>
            <person name="Braun M."/>
            <person name="Brignell S.C."/>
            <person name="Bron S."/>
            <person name="Brouillet S."/>
            <person name="Bruschi C.V."/>
            <person name="Caldwell B."/>
            <person name="Capuano V."/>
            <person name="Carter N.M."/>
            <person name="Choi S.-K."/>
            <person name="Codani J.-J."/>
            <person name="Connerton I.F."/>
            <person name="Cummings N.J."/>
            <person name="Daniel R.A."/>
            <person name="Denizot F."/>
            <person name="Devine K.M."/>
            <person name="Duesterhoeft A."/>
            <person name="Ehrlich S.D."/>
            <person name="Emmerson P.T."/>
            <person name="Entian K.-D."/>
            <person name="Errington J."/>
            <person name="Fabret C."/>
            <person name="Ferrari E."/>
            <person name="Foulger D."/>
            <person name="Fritz C."/>
            <person name="Fujita M."/>
            <person name="Fujita Y."/>
            <person name="Fuma S."/>
            <person name="Galizzi A."/>
            <person name="Galleron N."/>
            <person name="Ghim S.-Y."/>
            <person name="Glaser P."/>
            <person name="Goffeau A."/>
            <person name="Golightly E.J."/>
            <person name="Grandi G."/>
            <person name="Guiseppi G."/>
            <person name="Guy B.J."/>
            <person name="Haga K."/>
            <person name="Haiech J."/>
            <person name="Harwood C.R."/>
            <person name="Henaut A."/>
            <person name="Hilbert H."/>
            <person name="Holsappel S."/>
            <person name="Hosono S."/>
            <person name="Hullo M.-F."/>
            <person name="Itaya M."/>
            <person name="Jones L.-M."/>
            <person name="Joris B."/>
            <person name="Karamata D."/>
            <person name="Kasahara Y."/>
            <person name="Klaerr-Blanchard M."/>
            <person name="Klein C."/>
            <person name="Kobayashi Y."/>
            <person name="Koetter P."/>
            <person name="Koningstein G."/>
            <person name="Krogh S."/>
            <person name="Kumano M."/>
            <person name="Kurita K."/>
            <person name="Lapidus A."/>
            <person name="Lardinois S."/>
            <person name="Lauber J."/>
            <person name="Lazarevic V."/>
            <person name="Lee S.-M."/>
            <person name="Levine A."/>
            <person name="Liu H."/>
            <person name="Masuda S."/>
            <person name="Mauel C."/>
            <person name="Medigue C."/>
            <person name="Medina N."/>
            <person name="Mellado R.P."/>
            <person name="Mizuno M."/>
            <person name="Moestl D."/>
            <person name="Nakai S."/>
            <person name="Noback M."/>
            <person name="Noone D."/>
            <person name="O'Reilly M."/>
            <person name="Ogawa K."/>
            <person name="Ogiwara A."/>
            <person name="Oudega B."/>
            <person name="Park S.-H."/>
            <person name="Parro V."/>
            <person name="Pohl T.M."/>
            <person name="Portetelle D."/>
            <person name="Porwollik S."/>
            <person name="Prescott A.M."/>
            <person name="Presecan E."/>
            <person name="Pujic P."/>
            <person name="Purnelle B."/>
            <person name="Rapoport G."/>
            <person name="Rey M."/>
            <person name="Reynolds S."/>
            <person name="Rieger M."/>
            <person name="Rivolta C."/>
            <person name="Rocha E."/>
            <person name="Roche B."/>
            <person name="Rose M."/>
            <person name="Sadaie Y."/>
            <person name="Sato T."/>
            <person name="Scanlan E."/>
            <person name="Schleich S."/>
            <person name="Schroeter R."/>
            <person name="Scoffone F."/>
            <person name="Sekiguchi J."/>
            <person name="Sekowska A."/>
            <person name="Seror S.J."/>
            <person name="Serror P."/>
            <person name="Shin B.-S."/>
            <person name="Soldo B."/>
            <person name="Sorokin A."/>
            <person name="Tacconi E."/>
            <person name="Takagi T."/>
            <person name="Takahashi H."/>
            <person name="Takemaru K."/>
            <person name="Takeuchi M."/>
            <person name="Tamakoshi A."/>
            <person name="Tanaka T."/>
            <person name="Terpstra P."/>
            <person name="Tognoni A."/>
            <person name="Tosato V."/>
            <person name="Uchiyama S."/>
            <person name="Vandenbol M."/>
            <person name="Vannier F."/>
            <person name="Vassarotti A."/>
            <person name="Viari A."/>
            <person name="Wambutt R."/>
            <person name="Wedler E."/>
            <person name="Wedler H."/>
            <person name="Weitzenegger T."/>
            <person name="Winters P."/>
            <person name="Wipat A."/>
            <person name="Yamamoto H."/>
            <person name="Yamane K."/>
            <person name="Yasumoto K."/>
            <person name="Yata K."/>
            <person name="Yoshida K."/>
            <person name="Yoshikawa H.-F."/>
            <person name="Zumstein E."/>
            <person name="Yoshikawa H."/>
            <person name="Danchin A."/>
        </authorList>
    </citation>
    <scope>NUCLEOTIDE SEQUENCE [LARGE SCALE GENOMIC DNA]</scope>
    <source>
        <strain>168</strain>
    </source>
</reference>
<accession>O32013</accession>
<evidence type="ECO:0000305" key="1"/>
<name>YPZD_BACSU</name>
<gene>
    <name type="primary">ypzD</name>
    <name type="ordered locus">BSU23350</name>
</gene>